<comment type="catalytic activity">
    <reaction evidence="1">
        <text>(4aS,6R)-4a-hydroxy-L-erythro-5,6,7,8-tetrahydrobiopterin = (6R)-L-erythro-6,7-dihydrobiopterin + H2O</text>
        <dbReference type="Rhea" id="RHEA:11920"/>
        <dbReference type="ChEBI" id="CHEBI:15377"/>
        <dbReference type="ChEBI" id="CHEBI:15642"/>
        <dbReference type="ChEBI" id="CHEBI:43120"/>
        <dbReference type="EC" id="4.2.1.96"/>
    </reaction>
</comment>
<comment type="similarity">
    <text evidence="1">Belongs to the pterin-4-alpha-carbinolamine dehydratase family.</text>
</comment>
<sequence>MTELAQMKCEACQADAPKVTDAELAELIRMIPDWGVEVRDGIMQLERVYKFKNFKLAMEFTNKLADLAEEEFHHPGILTEWGKVTVTWWSHSIKGLHRNDFIMAAKTDQLLD</sequence>
<organism>
    <name type="scientific">Shewanella loihica (strain ATCC BAA-1088 / PV-4)</name>
    <dbReference type="NCBI Taxonomy" id="323850"/>
    <lineage>
        <taxon>Bacteria</taxon>
        <taxon>Pseudomonadati</taxon>
        <taxon>Pseudomonadota</taxon>
        <taxon>Gammaproteobacteria</taxon>
        <taxon>Alteromonadales</taxon>
        <taxon>Shewanellaceae</taxon>
        <taxon>Shewanella</taxon>
    </lineage>
</organism>
<feature type="chain" id="PRO_1000050457" description="Putative pterin-4-alpha-carbinolamine dehydratase">
    <location>
        <begin position="1"/>
        <end position="112"/>
    </location>
</feature>
<gene>
    <name type="ordered locus">Shew_1436</name>
</gene>
<dbReference type="EC" id="4.2.1.96" evidence="1"/>
<dbReference type="EMBL" id="CP000606">
    <property type="protein sequence ID" value="ABO23303.1"/>
    <property type="molecule type" value="Genomic_DNA"/>
</dbReference>
<dbReference type="RefSeq" id="WP_011865235.1">
    <property type="nucleotide sequence ID" value="NC_009092.1"/>
</dbReference>
<dbReference type="SMR" id="A3QCV5"/>
<dbReference type="STRING" id="323850.Shew_1436"/>
<dbReference type="KEGG" id="slo:Shew_1436"/>
<dbReference type="eggNOG" id="COG2154">
    <property type="taxonomic scope" value="Bacteria"/>
</dbReference>
<dbReference type="HOGENOM" id="CLU_081974_2_2_6"/>
<dbReference type="OrthoDB" id="5294615at2"/>
<dbReference type="Proteomes" id="UP000001558">
    <property type="component" value="Chromosome"/>
</dbReference>
<dbReference type="GO" id="GO:0008124">
    <property type="term" value="F:4-alpha-hydroxytetrahydrobiopterin dehydratase activity"/>
    <property type="evidence" value="ECO:0007669"/>
    <property type="project" value="UniProtKB-UniRule"/>
</dbReference>
<dbReference type="GO" id="GO:0006729">
    <property type="term" value="P:tetrahydrobiopterin biosynthetic process"/>
    <property type="evidence" value="ECO:0007669"/>
    <property type="project" value="InterPro"/>
</dbReference>
<dbReference type="CDD" id="cd00913">
    <property type="entry name" value="PCD_DCoH_subfamily_a"/>
    <property type="match status" value="1"/>
</dbReference>
<dbReference type="Gene3D" id="3.30.1360.20">
    <property type="entry name" value="Transcriptional coactivator/pterin dehydratase"/>
    <property type="match status" value="1"/>
</dbReference>
<dbReference type="HAMAP" id="MF_00434">
    <property type="entry name" value="Pterin_4_alpha"/>
    <property type="match status" value="1"/>
</dbReference>
<dbReference type="InterPro" id="IPR036428">
    <property type="entry name" value="PCD_sf"/>
</dbReference>
<dbReference type="InterPro" id="IPR050376">
    <property type="entry name" value="Pterin-4-alpha-carb_dehyd"/>
</dbReference>
<dbReference type="InterPro" id="IPR001533">
    <property type="entry name" value="Pterin_deHydtase"/>
</dbReference>
<dbReference type="NCBIfam" id="NF002016">
    <property type="entry name" value="PRK00823.1-1"/>
    <property type="match status" value="1"/>
</dbReference>
<dbReference type="PANTHER" id="PTHR42805">
    <property type="entry name" value="PTERIN-4-ALPHA-CARBINOLAMINE DEHYDRATASE-RELATED"/>
    <property type="match status" value="1"/>
</dbReference>
<dbReference type="PANTHER" id="PTHR42805:SF1">
    <property type="entry name" value="PTERIN-4-ALPHA-CARBINOLAMINE DEHYDRATASE-RELATED"/>
    <property type="match status" value="1"/>
</dbReference>
<dbReference type="Pfam" id="PF01329">
    <property type="entry name" value="Pterin_4a"/>
    <property type="match status" value="1"/>
</dbReference>
<dbReference type="SUPFAM" id="SSF55248">
    <property type="entry name" value="PCD-like"/>
    <property type="match status" value="1"/>
</dbReference>
<proteinExistence type="inferred from homology"/>
<protein>
    <recommendedName>
        <fullName evidence="1">Putative pterin-4-alpha-carbinolamine dehydratase</fullName>
        <shortName evidence="1">PHS</shortName>
        <ecNumber evidence="1">4.2.1.96</ecNumber>
    </recommendedName>
    <alternativeName>
        <fullName evidence="1">4-alpha-hydroxy-tetrahydropterin dehydratase</fullName>
    </alternativeName>
    <alternativeName>
        <fullName evidence="1">Pterin carbinolamine dehydratase</fullName>
        <shortName evidence="1">PCD</shortName>
    </alternativeName>
</protein>
<name>PHS_SHELP</name>
<keyword id="KW-0456">Lyase</keyword>
<keyword id="KW-1185">Reference proteome</keyword>
<reference key="1">
    <citation type="submission" date="2007-03" db="EMBL/GenBank/DDBJ databases">
        <title>Complete sequence of Shewanella loihica PV-4.</title>
        <authorList>
            <consortium name="US DOE Joint Genome Institute"/>
            <person name="Copeland A."/>
            <person name="Lucas S."/>
            <person name="Lapidus A."/>
            <person name="Barry K."/>
            <person name="Detter J.C."/>
            <person name="Glavina del Rio T."/>
            <person name="Hammon N."/>
            <person name="Israni S."/>
            <person name="Dalin E."/>
            <person name="Tice H."/>
            <person name="Pitluck S."/>
            <person name="Chain P."/>
            <person name="Malfatti S."/>
            <person name="Shin M."/>
            <person name="Vergez L."/>
            <person name="Schmutz J."/>
            <person name="Larimer F."/>
            <person name="Land M."/>
            <person name="Hauser L."/>
            <person name="Kyrpides N."/>
            <person name="Mikhailova N."/>
            <person name="Romine M.F."/>
            <person name="Serres G."/>
            <person name="Fredrickson J."/>
            <person name="Tiedje J."/>
            <person name="Richardson P."/>
        </authorList>
    </citation>
    <scope>NUCLEOTIDE SEQUENCE [LARGE SCALE GENOMIC DNA]</scope>
    <source>
        <strain>ATCC BAA-1088 / PV-4</strain>
    </source>
</reference>
<accession>A3QCV5</accession>
<evidence type="ECO:0000255" key="1">
    <source>
        <dbReference type="HAMAP-Rule" id="MF_00434"/>
    </source>
</evidence>